<proteinExistence type="inferred from homology"/>
<evidence type="ECO:0000255" key="1">
    <source>
        <dbReference type="HAMAP-Rule" id="MF_00294"/>
    </source>
</evidence>
<evidence type="ECO:0000305" key="2"/>
<organism>
    <name type="scientific">Alkaliphilus oremlandii (strain OhILAs)</name>
    <name type="common">Clostridium oremlandii (strain OhILAs)</name>
    <dbReference type="NCBI Taxonomy" id="350688"/>
    <lineage>
        <taxon>Bacteria</taxon>
        <taxon>Bacillati</taxon>
        <taxon>Bacillota</taxon>
        <taxon>Clostridia</taxon>
        <taxon>Peptostreptococcales</taxon>
        <taxon>Natronincolaceae</taxon>
        <taxon>Alkaliphilus</taxon>
    </lineage>
</organism>
<protein>
    <recommendedName>
        <fullName evidence="1">Large ribosomal subunit protein bL33</fullName>
    </recommendedName>
    <alternativeName>
        <fullName evidence="2">50S ribosomal protein L33</fullName>
    </alternativeName>
</protein>
<name>RL33_ALKOO</name>
<feature type="chain" id="PRO_0000356370" description="Large ribosomal subunit protein bL33">
    <location>
        <begin position="1"/>
        <end position="49"/>
    </location>
</feature>
<sequence length="49" mass="5879">MRVNITLACTECKQRNYNTSKNKKSNPDRMELKKYCKFCKTHTAHRETK</sequence>
<comment type="similarity">
    <text evidence="1">Belongs to the bacterial ribosomal protein bL33 family.</text>
</comment>
<reference key="1">
    <citation type="submission" date="2007-10" db="EMBL/GenBank/DDBJ databases">
        <title>Complete genome of Alkaliphilus oremlandii OhILAs.</title>
        <authorList>
            <person name="Copeland A."/>
            <person name="Lucas S."/>
            <person name="Lapidus A."/>
            <person name="Barry K."/>
            <person name="Detter J.C."/>
            <person name="Glavina del Rio T."/>
            <person name="Hammon N."/>
            <person name="Israni S."/>
            <person name="Dalin E."/>
            <person name="Tice H."/>
            <person name="Pitluck S."/>
            <person name="Chain P."/>
            <person name="Malfatti S."/>
            <person name="Shin M."/>
            <person name="Vergez L."/>
            <person name="Schmutz J."/>
            <person name="Larimer F."/>
            <person name="Land M."/>
            <person name="Hauser L."/>
            <person name="Kyrpides N."/>
            <person name="Mikhailova N."/>
            <person name="Stolz J.F."/>
            <person name="Dawson A."/>
            <person name="Fisher E."/>
            <person name="Crable B."/>
            <person name="Perera E."/>
            <person name="Lisak J."/>
            <person name="Ranganathan M."/>
            <person name="Basu P."/>
            <person name="Richardson P."/>
        </authorList>
    </citation>
    <scope>NUCLEOTIDE SEQUENCE [LARGE SCALE GENOMIC DNA]</scope>
    <source>
        <strain>OhILAs</strain>
    </source>
</reference>
<gene>
    <name evidence="1" type="primary">rpmG</name>
    <name type="ordered locus">Clos_0477</name>
</gene>
<keyword id="KW-1185">Reference proteome</keyword>
<keyword id="KW-0687">Ribonucleoprotein</keyword>
<keyword id="KW-0689">Ribosomal protein</keyword>
<accession>A8MLC5</accession>
<dbReference type="EMBL" id="CP000853">
    <property type="protein sequence ID" value="ABW18039.1"/>
    <property type="molecule type" value="Genomic_DNA"/>
</dbReference>
<dbReference type="RefSeq" id="WP_012158354.1">
    <property type="nucleotide sequence ID" value="NC_009922.1"/>
</dbReference>
<dbReference type="SMR" id="A8MLC5"/>
<dbReference type="STRING" id="350688.Clos_0477"/>
<dbReference type="KEGG" id="aoe:Clos_0477"/>
<dbReference type="eggNOG" id="COG0267">
    <property type="taxonomic scope" value="Bacteria"/>
</dbReference>
<dbReference type="HOGENOM" id="CLU_190949_0_1_9"/>
<dbReference type="OrthoDB" id="9801333at2"/>
<dbReference type="Proteomes" id="UP000000269">
    <property type="component" value="Chromosome"/>
</dbReference>
<dbReference type="GO" id="GO:0005737">
    <property type="term" value="C:cytoplasm"/>
    <property type="evidence" value="ECO:0007669"/>
    <property type="project" value="UniProtKB-ARBA"/>
</dbReference>
<dbReference type="GO" id="GO:1990904">
    <property type="term" value="C:ribonucleoprotein complex"/>
    <property type="evidence" value="ECO:0007669"/>
    <property type="project" value="UniProtKB-KW"/>
</dbReference>
<dbReference type="GO" id="GO:0005840">
    <property type="term" value="C:ribosome"/>
    <property type="evidence" value="ECO:0007669"/>
    <property type="project" value="UniProtKB-KW"/>
</dbReference>
<dbReference type="GO" id="GO:0003735">
    <property type="term" value="F:structural constituent of ribosome"/>
    <property type="evidence" value="ECO:0007669"/>
    <property type="project" value="InterPro"/>
</dbReference>
<dbReference type="GO" id="GO:0006412">
    <property type="term" value="P:translation"/>
    <property type="evidence" value="ECO:0007669"/>
    <property type="project" value="UniProtKB-UniRule"/>
</dbReference>
<dbReference type="Gene3D" id="2.20.28.120">
    <property type="entry name" value="Ribosomal protein L33"/>
    <property type="match status" value="1"/>
</dbReference>
<dbReference type="HAMAP" id="MF_00294">
    <property type="entry name" value="Ribosomal_bL33"/>
    <property type="match status" value="1"/>
</dbReference>
<dbReference type="InterPro" id="IPR001705">
    <property type="entry name" value="Ribosomal_bL33"/>
</dbReference>
<dbReference type="InterPro" id="IPR018264">
    <property type="entry name" value="Ribosomal_bL33_CS"/>
</dbReference>
<dbReference type="InterPro" id="IPR038584">
    <property type="entry name" value="Ribosomal_bL33_sf"/>
</dbReference>
<dbReference type="InterPro" id="IPR011332">
    <property type="entry name" value="Ribosomal_zn-bd"/>
</dbReference>
<dbReference type="NCBIfam" id="NF001764">
    <property type="entry name" value="PRK00504.1"/>
    <property type="match status" value="1"/>
</dbReference>
<dbReference type="NCBIfam" id="NF001860">
    <property type="entry name" value="PRK00595.1"/>
    <property type="match status" value="1"/>
</dbReference>
<dbReference type="NCBIfam" id="TIGR01023">
    <property type="entry name" value="rpmG_bact"/>
    <property type="match status" value="1"/>
</dbReference>
<dbReference type="PANTHER" id="PTHR43168">
    <property type="entry name" value="50S RIBOSOMAL PROTEIN L33, CHLOROPLASTIC"/>
    <property type="match status" value="1"/>
</dbReference>
<dbReference type="PANTHER" id="PTHR43168:SF2">
    <property type="entry name" value="LARGE RIBOSOMAL SUBUNIT PROTEIN BL33C"/>
    <property type="match status" value="1"/>
</dbReference>
<dbReference type="Pfam" id="PF00471">
    <property type="entry name" value="Ribosomal_L33"/>
    <property type="match status" value="1"/>
</dbReference>
<dbReference type="SUPFAM" id="SSF57829">
    <property type="entry name" value="Zn-binding ribosomal proteins"/>
    <property type="match status" value="1"/>
</dbReference>
<dbReference type="PROSITE" id="PS00582">
    <property type="entry name" value="RIBOSOMAL_L33"/>
    <property type="match status" value="1"/>
</dbReference>